<protein>
    <recommendedName>
        <fullName evidence="5">ATP-dependent DNA helicase RecQ</fullName>
        <ecNumber evidence="1">5.6.2.4</ecNumber>
    </recommendedName>
    <alternativeName>
        <fullName evidence="6">DNA 3'-5' helicase RecQ</fullName>
    </alternativeName>
</protein>
<evidence type="ECO:0000250" key="1">
    <source>
        <dbReference type="UniProtKB" id="P15043"/>
    </source>
</evidence>
<evidence type="ECO:0000255" key="2">
    <source>
        <dbReference type="PROSITE-ProRule" id="PRU00328"/>
    </source>
</evidence>
<evidence type="ECO:0000255" key="3">
    <source>
        <dbReference type="PROSITE-ProRule" id="PRU00541"/>
    </source>
</evidence>
<evidence type="ECO:0000255" key="4">
    <source>
        <dbReference type="PROSITE-ProRule" id="PRU00542"/>
    </source>
</evidence>
<evidence type="ECO:0000303" key="5">
    <source>
    </source>
</evidence>
<evidence type="ECO:0000305" key="6"/>
<organism>
    <name type="scientific">Haemophilus influenzae (strain ATCC 51907 / DSM 11121 / KW20 / Rd)</name>
    <dbReference type="NCBI Taxonomy" id="71421"/>
    <lineage>
        <taxon>Bacteria</taxon>
        <taxon>Pseudomonadati</taxon>
        <taxon>Pseudomonadota</taxon>
        <taxon>Gammaproteobacteria</taxon>
        <taxon>Pasteurellales</taxon>
        <taxon>Pasteurellaceae</taxon>
        <taxon>Haemophilus</taxon>
    </lineage>
</organism>
<keyword id="KW-0067">ATP-binding</keyword>
<keyword id="KW-0227">DNA damage</keyword>
<keyword id="KW-0233">DNA recombination</keyword>
<keyword id="KW-0234">DNA repair</keyword>
<keyword id="KW-0238">DNA-binding</keyword>
<keyword id="KW-0347">Helicase</keyword>
<keyword id="KW-0378">Hydrolase</keyword>
<keyword id="KW-0413">Isomerase</keyword>
<keyword id="KW-0479">Metal-binding</keyword>
<keyword id="KW-0547">Nucleotide-binding</keyword>
<keyword id="KW-1185">Reference proteome</keyword>
<keyword id="KW-0862">Zinc</keyword>
<reference key="1">
    <citation type="journal article" date="1995" name="Science">
        <title>Whole-genome random sequencing and assembly of Haemophilus influenzae Rd.</title>
        <authorList>
            <person name="Fleischmann R.D."/>
            <person name="Adams M.D."/>
            <person name="White O."/>
            <person name="Clayton R.A."/>
            <person name="Kirkness E.F."/>
            <person name="Kerlavage A.R."/>
            <person name="Bult C.J."/>
            <person name="Tomb J.-F."/>
            <person name="Dougherty B.A."/>
            <person name="Merrick J.M."/>
            <person name="McKenney K."/>
            <person name="Sutton G.G."/>
            <person name="FitzHugh W."/>
            <person name="Fields C.A."/>
            <person name="Gocayne J.D."/>
            <person name="Scott J.D."/>
            <person name="Shirley R."/>
            <person name="Liu L.-I."/>
            <person name="Glodek A."/>
            <person name="Kelley J.M."/>
            <person name="Weidman J.F."/>
            <person name="Phillips C.A."/>
            <person name="Spriggs T."/>
            <person name="Hedblom E."/>
            <person name="Cotton M.D."/>
            <person name="Utterback T.R."/>
            <person name="Hanna M.C."/>
            <person name="Nguyen D.T."/>
            <person name="Saudek D.M."/>
            <person name="Brandon R.C."/>
            <person name="Fine L.D."/>
            <person name="Fritchman J.L."/>
            <person name="Fuhrmann J.L."/>
            <person name="Geoghagen N.S.M."/>
            <person name="Gnehm C.L."/>
            <person name="McDonald L.A."/>
            <person name="Small K.V."/>
            <person name="Fraser C.M."/>
            <person name="Smith H.O."/>
            <person name="Venter J.C."/>
        </authorList>
    </citation>
    <scope>NUCLEOTIDE SEQUENCE [LARGE SCALE GENOMIC DNA]</scope>
    <source>
        <strain>ATCC 51907 / DSM 11121 / KW20 / Rd</strain>
    </source>
</reference>
<reference key="2">
    <citation type="submission" date="1996-09" db="EMBL/GenBank/DDBJ databases">
        <authorList>
            <person name="White O."/>
            <person name="Clayton R.A."/>
            <person name="Kerlavage A.R."/>
            <person name="Fleischmann R.D."/>
        </authorList>
    </citation>
    <scope>SEQUENCE REVISION</scope>
</reference>
<gene>
    <name evidence="5" type="primary">recQ</name>
    <name type="ordered locus">HI_0728</name>
</gene>
<name>RECQ_HAEIN</name>
<comment type="function">
    <text evidence="1">An ATP-dependent DNA helicase which unwinds DNA in a 3'-5' direction. Plays a role in recombination.</text>
</comment>
<comment type="catalytic activity">
    <reaction evidence="1">
        <text>Couples ATP hydrolysis with the unwinding of duplex DNA by translocating in the 3'-5' direction.</text>
        <dbReference type="EC" id="5.6.2.4"/>
    </reaction>
</comment>
<comment type="catalytic activity">
    <reaction evidence="1">
        <text>ATP + H2O = ADP + phosphate + H(+)</text>
        <dbReference type="Rhea" id="RHEA:13065"/>
        <dbReference type="ChEBI" id="CHEBI:15377"/>
        <dbReference type="ChEBI" id="CHEBI:15378"/>
        <dbReference type="ChEBI" id="CHEBI:30616"/>
        <dbReference type="ChEBI" id="CHEBI:43474"/>
        <dbReference type="ChEBI" id="CHEBI:456216"/>
    </reaction>
</comment>
<comment type="cofactor">
    <cofactor evidence="1">
        <name>Mg(2+)</name>
        <dbReference type="ChEBI" id="CHEBI:18420"/>
    </cofactor>
    <text evidence="1">Requires Mg(2+) for helicase activity.</text>
</comment>
<comment type="cofactor">
    <cofactor evidence="1">
        <name>Zn(2+)</name>
        <dbReference type="ChEBI" id="CHEBI:29105"/>
    </cofactor>
</comment>
<comment type="similarity">
    <text evidence="6">Belongs to the helicase family. RecQ subfamily.</text>
</comment>
<proteinExistence type="inferred from homology"/>
<accession>P71359</accession>
<feature type="chain" id="PRO_0000205036" description="ATP-dependent DNA helicase RecQ">
    <location>
        <begin position="1"/>
        <end position="619"/>
    </location>
</feature>
<feature type="domain" description="Helicase ATP-binding" evidence="3">
    <location>
        <begin position="37"/>
        <end position="205"/>
    </location>
</feature>
<feature type="domain" description="Helicase C-terminal" evidence="4">
    <location>
        <begin position="229"/>
        <end position="374"/>
    </location>
</feature>
<feature type="domain" description="HRDC" evidence="2">
    <location>
        <begin position="535"/>
        <end position="615"/>
    </location>
</feature>
<feature type="short sequence motif" description="DEAH box">
    <location>
        <begin position="149"/>
        <end position="152"/>
    </location>
</feature>
<feature type="binding site" evidence="3">
    <location>
        <begin position="50"/>
        <end position="57"/>
    </location>
    <ligand>
        <name>ATP</name>
        <dbReference type="ChEBI" id="CHEBI:30616"/>
    </ligand>
</feature>
<feature type="binding site" evidence="1">
    <location>
        <position position="383"/>
    </location>
    <ligand>
        <name>Zn(2+)</name>
        <dbReference type="ChEBI" id="CHEBI:29105"/>
    </ligand>
</feature>
<feature type="binding site" evidence="1">
    <location>
        <position position="400"/>
    </location>
    <ligand>
        <name>Zn(2+)</name>
        <dbReference type="ChEBI" id="CHEBI:29105"/>
    </ligand>
</feature>
<feature type="binding site" evidence="1">
    <location>
        <position position="403"/>
    </location>
    <ligand>
        <name>Zn(2+)</name>
        <dbReference type="ChEBI" id="CHEBI:29105"/>
    </ligand>
</feature>
<feature type="binding site" evidence="1">
    <location>
        <position position="406"/>
    </location>
    <ligand>
        <name>Zn(2+)</name>
        <dbReference type="ChEBI" id="CHEBI:29105"/>
    </ligand>
</feature>
<dbReference type="EC" id="5.6.2.4" evidence="1"/>
<dbReference type="EMBL" id="L42023">
    <property type="protein sequence ID" value="AAC22387.1"/>
    <property type="molecule type" value="Genomic_DNA"/>
</dbReference>
<dbReference type="RefSeq" id="NP_438887.1">
    <property type="nucleotide sequence ID" value="NC_000907.1"/>
</dbReference>
<dbReference type="SMR" id="P71359"/>
<dbReference type="STRING" id="71421.HI_0728"/>
<dbReference type="EnsemblBacteria" id="AAC22387">
    <property type="protein sequence ID" value="AAC22387"/>
    <property type="gene ID" value="HI_0728"/>
</dbReference>
<dbReference type="KEGG" id="hin:HI_0728"/>
<dbReference type="PATRIC" id="fig|71421.8.peg.762"/>
<dbReference type="eggNOG" id="COG0514">
    <property type="taxonomic scope" value="Bacteria"/>
</dbReference>
<dbReference type="HOGENOM" id="CLU_001103_14_3_6"/>
<dbReference type="OrthoDB" id="9760034at2"/>
<dbReference type="PhylomeDB" id="P71359"/>
<dbReference type="BioCyc" id="HINF71421:G1GJ1-768-MONOMER"/>
<dbReference type="Proteomes" id="UP000000579">
    <property type="component" value="Chromosome"/>
</dbReference>
<dbReference type="GO" id="GO:0043590">
    <property type="term" value="C:bacterial nucleoid"/>
    <property type="evidence" value="ECO:0000318"/>
    <property type="project" value="GO_Central"/>
</dbReference>
<dbReference type="GO" id="GO:0005694">
    <property type="term" value="C:chromosome"/>
    <property type="evidence" value="ECO:0000318"/>
    <property type="project" value="GO_Central"/>
</dbReference>
<dbReference type="GO" id="GO:0005737">
    <property type="term" value="C:cytoplasm"/>
    <property type="evidence" value="ECO:0000318"/>
    <property type="project" value="GO_Central"/>
</dbReference>
<dbReference type="GO" id="GO:0030894">
    <property type="term" value="C:replisome"/>
    <property type="evidence" value="ECO:0000318"/>
    <property type="project" value="GO_Central"/>
</dbReference>
<dbReference type="GO" id="GO:0043138">
    <property type="term" value="F:3'-5' DNA helicase activity"/>
    <property type="evidence" value="ECO:0000318"/>
    <property type="project" value="GO_Central"/>
</dbReference>
<dbReference type="GO" id="GO:0005524">
    <property type="term" value="F:ATP binding"/>
    <property type="evidence" value="ECO:0007669"/>
    <property type="project" value="UniProtKB-KW"/>
</dbReference>
<dbReference type="GO" id="GO:0016887">
    <property type="term" value="F:ATP hydrolysis activity"/>
    <property type="evidence" value="ECO:0007669"/>
    <property type="project" value="RHEA"/>
</dbReference>
<dbReference type="GO" id="GO:0003677">
    <property type="term" value="F:DNA binding"/>
    <property type="evidence" value="ECO:0007669"/>
    <property type="project" value="UniProtKB-KW"/>
</dbReference>
<dbReference type="GO" id="GO:0009378">
    <property type="term" value="F:four-way junction helicase activity"/>
    <property type="evidence" value="ECO:0000318"/>
    <property type="project" value="GO_Central"/>
</dbReference>
<dbReference type="GO" id="GO:0046872">
    <property type="term" value="F:metal ion binding"/>
    <property type="evidence" value="ECO:0007669"/>
    <property type="project" value="UniProtKB-KW"/>
</dbReference>
<dbReference type="GO" id="GO:0006310">
    <property type="term" value="P:DNA recombination"/>
    <property type="evidence" value="ECO:0000318"/>
    <property type="project" value="GO_Central"/>
</dbReference>
<dbReference type="GO" id="GO:0006281">
    <property type="term" value="P:DNA repair"/>
    <property type="evidence" value="ECO:0000318"/>
    <property type="project" value="GO_Central"/>
</dbReference>
<dbReference type="GO" id="GO:0006260">
    <property type="term" value="P:DNA replication"/>
    <property type="evidence" value="ECO:0007669"/>
    <property type="project" value="InterPro"/>
</dbReference>
<dbReference type="GO" id="GO:0009432">
    <property type="term" value="P:SOS response"/>
    <property type="evidence" value="ECO:0007669"/>
    <property type="project" value="InterPro"/>
</dbReference>
<dbReference type="CDD" id="cd17920">
    <property type="entry name" value="DEXHc_RecQ"/>
    <property type="match status" value="1"/>
</dbReference>
<dbReference type="CDD" id="cd18794">
    <property type="entry name" value="SF2_C_RecQ"/>
    <property type="match status" value="1"/>
</dbReference>
<dbReference type="FunFam" id="1.10.10.10:FF:000175">
    <property type="entry name" value="ATP-dependent DNA helicase RecQ"/>
    <property type="match status" value="1"/>
</dbReference>
<dbReference type="FunFam" id="1.10.150.80:FF:000002">
    <property type="entry name" value="ATP-dependent DNA helicase RecQ"/>
    <property type="match status" value="1"/>
</dbReference>
<dbReference type="FunFam" id="3.40.50.300:FF:000296">
    <property type="entry name" value="ATP-dependent DNA helicase RecQ"/>
    <property type="match status" value="1"/>
</dbReference>
<dbReference type="FunFam" id="3.40.50.300:FF:000156">
    <property type="entry name" value="ATP-dependent DNA helicase recQ"/>
    <property type="match status" value="1"/>
</dbReference>
<dbReference type="Gene3D" id="1.10.150.80">
    <property type="entry name" value="HRDC domain"/>
    <property type="match status" value="1"/>
</dbReference>
<dbReference type="Gene3D" id="3.40.50.300">
    <property type="entry name" value="P-loop containing nucleotide triphosphate hydrolases"/>
    <property type="match status" value="2"/>
</dbReference>
<dbReference type="Gene3D" id="1.10.10.10">
    <property type="entry name" value="Winged helix-like DNA-binding domain superfamily/Winged helix DNA-binding domain"/>
    <property type="match status" value="1"/>
</dbReference>
<dbReference type="InterPro" id="IPR011545">
    <property type="entry name" value="DEAD/DEAH_box_helicase_dom"/>
</dbReference>
<dbReference type="InterPro" id="IPR004589">
    <property type="entry name" value="DNA_helicase_ATP-dep_RecQ"/>
</dbReference>
<dbReference type="InterPro" id="IPR006293">
    <property type="entry name" value="DNA_helicase_ATP-dep_RecQ_bac"/>
</dbReference>
<dbReference type="InterPro" id="IPR014001">
    <property type="entry name" value="Helicase_ATP-bd"/>
</dbReference>
<dbReference type="InterPro" id="IPR001650">
    <property type="entry name" value="Helicase_C-like"/>
</dbReference>
<dbReference type="InterPro" id="IPR010997">
    <property type="entry name" value="HRDC-like_sf"/>
</dbReference>
<dbReference type="InterPro" id="IPR002121">
    <property type="entry name" value="HRDC_dom"/>
</dbReference>
<dbReference type="InterPro" id="IPR044876">
    <property type="entry name" value="HRDC_dom_sf"/>
</dbReference>
<dbReference type="InterPro" id="IPR027417">
    <property type="entry name" value="P-loop_NTPase"/>
</dbReference>
<dbReference type="InterPro" id="IPR032284">
    <property type="entry name" value="RecQ_Zn-bd"/>
</dbReference>
<dbReference type="InterPro" id="IPR018982">
    <property type="entry name" value="RQC_domain"/>
</dbReference>
<dbReference type="InterPro" id="IPR036388">
    <property type="entry name" value="WH-like_DNA-bd_sf"/>
</dbReference>
<dbReference type="NCBIfam" id="TIGR01389">
    <property type="entry name" value="recQ"/>
    <property type="match status" value="1"/>
</dbReference>
<dbReference type="NCBIfam" id="TIGR00614">
    <property type="entry name" value="recQ_fam"/>
    <property type="match status" value="1"/>
</dbReference>
<dbReference type="PANTHER" id="PTHR13710:SF105">
    <property type="entry name" value="ATP-DEPENDENT DNA HELICASE Q1"/>
    <property type="match status" value="1"/>
</dbReference>
<dbReference type="PANTHER" id="PTHR13710">
    <property type="entry name" value="DNA HELICASE RECQ FAMILY MEMBER"/>
    <property type="match status" value="1"/>
</dbReference>
<dbReference type="Pfam" id="PF00270">
    <property type="entry name" value="DEAD"/>
    <property type="match status" value="1"/>
</dbReference>
<dbReference type="Pfam" id="PF00271">
    <property type="entry name" value="Helicase_C"/>
    <property type="match status" value="1"/>
</dbReference>
<dbReference type="Pfam" id="PF00570">
    <property type="entry name" value="HRDC"/>
    <property type="match status" value="1"/>
</dbReference>
<dbReference type="Pfam" id="PF16124">
    <property type="entry name" value="RecQ_Zn_bind"/>
    <property type="match status" value="1"/>
</dbReference>
<dbReference type="Pfam" id="PF09382">
    <property type="entry name" value="RQC"/>
    <property type="match status" value="1"/>
</dbReference>
<dbReference type="SMART" id="SM00487">
    <property type="entry name" value="DEXDc"/>
    <property type="match status" value="1"/>
</dbReference>
<dbReference type="SMART" id="SM00490">
    <property type="entry name" value="HELICc"/>
    <property type="match status" value="1"/>
</dbReference>
<dbReference type="SMART" id="SM00341">
    <property type="entry name" value="HRDC"/>
    <property type="match status" value="1"/>
</dbReference>
<dbReference type="SMART" id="SM00956">
    <property type="entry name" value="RQC"/>
    <property type="match status" value="1"/>
</dbReference>
<dbReference type="SUPFAM" id="SSF47819">
    <property type="entry name" value="HRDC-like"/>
    <property type="match status" value="1"/>
</dbReference>
<dbReference type="SUPFAM" id="SSF52540">
    <property type="entry name" value="P-loop containing nucleoside triphosphate hydrolases"/>
    <property type="match status" value="2"/>
</dbReference>
<dbReference type="PROSITE" id="PS51192">
    <property type="entry name" value="HELICASE_ATP_BIND_1"/>
    <property type="match status" value="1"/>
</dbReference>
<dbReference type="PROSITE" id="PS51194">
    <property type="entry name" value="HELICASE_CTER"/>
    <property type="match status" value="1"/>
</dbReference>
<dbReference type="PROSITE" id="PS50967">
    <property type="entry name" value="HRDC"/>
    <property type="match status" value="1"/>
</dbReference>
<sequence length="619" mass="70056">MLDSPLLSKIIEKPTALSVLKSVFGYQSFRKGQEEVINAALNGQDALVVMATGNGKSLCYQIPALCFDGLTLVISPLISLMKDQVDQLQANGIEADFLNSSQTLEQQQQVQNKLISGQLKLLYVSPEKVMTNSFFQLISYSKVCFIAIDEAHCISQWGHDFRPEYTQLGGLKASFPDAPIMALTATADYATQQDILRHLNLKNLHKYIGSFDRPNIRYTLEEKYKPMEQLTRFVLAQKGKSGIIYCNSRNKVERIAESLRNKGVSAAAYHAGMETAIRERVQQDFQRDNVQVVVATIAFGMGINKSNVRFVAHFDLPRSIESYYQETGRAGRDDLPAEAVLFYEPADYAWLQKILLEKPETPQRQIEQHKLEAIGEFAESQTCRRLVLLNYFGEHRQTPCNNCDICLDPPKKYDGLVDAQKVMSTIYRVGQCFGAHYVIAVLRGMHNQKIIERQHHKLSVYGIGKDKSKEHWQSVIRQLIHLGFVQQVISELNPTLQLTESAKVILKGEEPLELAMPRISAISKIAHNPQRQGVANYDKDLFARLRFLRKQIADKENIPPYIVFNDATLQEMAQYMPTSNIEMLQINGVGSIKLERFGQPFMALIQEHKAILANAQNND</sequence>